<gene>
    <name evidence="10 11 12" type="primary">glnA2</name>
    <name evidence="10 11 12 13" type="ordered locus">SCO2241</name>
</gene>
<organism evidence="14">
    <name type="scientific">Streptomyces coelicolor (strain ATCC BAA-471 / A3(2) / M145)</name>
    <dbReference type="NCBI Taxonomy" id="100226"/>
    <lineage>
        <taxon>Bacteria</taxon>
        <taxon>Bacillati</taxon>
        <taxon>Actinomycetota</taxon>
        <taxon>Actinomycetes</taxon>
        <taxon>Kitasatosporales</taxon>
        <taxon>Streptomycetaceae</taxon>
        <taxon>Streptomyces</taxon>
        <taxon>Streptomyces albidoflavus group</taxon>
    </lineage>
</organism>
<keyword id="KW-0067">ATP-binding</keyword>
<keyword id="KW-0436">Ligase</keyword>
<keyword id="KW-0460">Magnesium</keyword>
<keyword id="KW-0479">Metal-binding</keyword>
<keyword id="KW-0547">Nucleotide-binding</keyword>
<keyword id="KW-1185">Reference proteome</keyword>
<dbReference type="EC" id="6.3.1.-" evidence="9"/>
<dbReference type="EMBL" id="AL939111">
    <property type="protein sequence ID" value="CAB66175.1"/>
    <property type="molecule type" value="Genomic_DNA"/>
</dbReference>
<dbReference type="RefSeq" id="NP_626490.1">
    <property type="nucleotide sequence ID" value="NC_003888.3"/>
</dbReference>
<dbReference type="SMR" id="Q9RDS6"/>
<dbReference type="FunCoup" id="Q9RDS6">
    <property type="interactions" value="279"/>
</dbReference>
<dbReference type="STRING" id="100226.gene:17759838"/>
<dbReference type="PaxDb" id="100226-SCO2241"/>
<dbReference type="KEGG" id="sco:SCO2241"/>
<dbReference type="PATRIC" id="fig|100226.15.peg.2279"/>
<dbReference type="eggNOG" id="COG0174">
    <property type="taxonomic scope" value="Bacteria"/>
</dbReference>
<dbReference type="HOGENOM" id="CLU_017290_1_3_11"/>
<dbReference type="InParanoid" id="Q9RDS6"/>
<dbReference type="OrthoDB" id="9807095at2"/>
<dbReference type="PhylomeDB" id="Q9RDS6"/>
<dbReference type="UniPathway" id="UPA00188"/>
<dbReference type="UniPathway" id="UPA00211"/>
<dbReference type="UniPathway" id="UPA00250"/>
<dbReference type="Proteomes" id="UP000001973">
    <property type="component" value="Chromosome"/>
</dbReference>
<dbReference type="GO" id="GO:0016880">
    <property type="term" value="F:acid-ammonia (or amide) ligase activity"/>
    <property type="evidence" value="ECO:0000314"/>
    <property type="project" value="UniProtKB"/>
</dbReference>
<dbReference type="GO" id="GO:0005524">
    <property type="term" value="F:ATP binding"/>
    <property type="evidence" value="ECO:0000250"/>
    <property type="project" value="UniProtKB"/>
</dbReference>
<dbReference type="GO" id="GO:0016595">
    <property type="term" value="F:glutamate binding"/>
    <property type="evidence" value="ECO:0000250"/>
    <property type="project" value="UniProtKB"/>
</dbReference>
<dbReference type="GO" id="GO:0004357">
    <property type="term" value="F:glutamate-cysteine ligase activity"/>
    <property type="evidence" value="ECO:0000314"/>
    <property type="project" value="UniProtKB"/>
</dbReference>
<dbReference type="GO" id="GO:0034024">
    <property type="term" value="F:glutamate-putrescine ligase activity"/>
    <property type="evidence" value="ECO:0000314"/>
    <property type="project" value="UniProtKB"/>
</dbReference>
<dbReference type="GO" id="GO:0004356">
    <property type="term" value="F:glutamine synthetase activity"/>
    <property type="evidence" value="ECO:0007669"/>
    <property type="project" value="InterPro"/>
</dbReference>
<dbReference type="GO" id="GO:0000287">
    <property type="term" value="F:magnesium ion binding"/>
    <property type="evidence" value="ECO:0000250"/>
    <property type="project" value="UniProtKB"/>
</dbReference>
<dbReference type="GO" id="GO:1904584">
    <property type="term" value="P:cellular response to polyamine macromolecule"/>
    <property type="evidence" value="ECO:0000315"/>
    <property type="project" value="UniProtKB"/>
</dbReference>
<dbReference type="GO" id="GO:0006536">
    <property type="term" value="P:glutamate metabolic process"/>
    <property type="evidence" value="ECO:0000314"/>
    <property type="project" value="UniProtKB"/>
</dbReference>
<dbReference type="GO" id="GO:0006542">
    <property type="term" value="P:glutamine biosynthetic process"/>
    <property type="evidence" value="ECO:0000318"/>
    <property type="project" value="GO_Central"/>
</dbReference>
<dbReference type="GO" id="GO:0006598">
    <property type="term" value="P:polyamine catabolic process"/>
    <property type="evidence" value="ECO:0000314"/>
    <property type="project" value="UniProtKB"/>
</dbReference>
<dbReference type="GO" id="GO:0009447">
    <property type="term" value="P:putrescine catabolic process"/>
    <property type="evidence" value="ECO:0000314"/>
    <property type="project" value="UniProtKB"/>
</dbReference>
<dbReference type="GO" id="GO:0042594">
    <property type="term" value="P:response to starvation"/>
    <property type="evidence" value="ECO:0000270"/>
    <property type="project" value="UniProtKB"/>
</dbReference>
<dbReference type="GO" id="GO:0009636">
    <property type="term" value="P:response to toxic substance"/>
    <property type="evidence" value="ECO:0000315"/>
    <property type="project" value="UniProtKB"/>
</dbReference>
<dbReference type="GO" id="GO:0046203">
    <property type="term" value="P:spermidine catabolic process"/>
    <property type="evidence" value="ECO:0000314"/>
    <property type="project" value="UniProtKB"/>
</dbReference>
<dbReference type="GO" id="GO:0046208">
    <property type="term" value="P:spermine catabolic process"/>
    <property type="evidence" value="ECO:0000314"/>
    <property type="project" value="UniProtKB"/>
</dbReference>
<dbReference type="FunFam" id="3.30.590.10:FF:000003">
    <property type="entry name" value="Glutamine synthetase 2"/>
    <property type="match status" value="1"/>
</dbReference>
<dbReference type="FunFam" id="3.10.20.70:FF:000002">
    <property type="entry name" value="Glutamine synthetase I"/>
    <property type="match status" value="1"/>
</dbReference>
<dbReference type="Gene3D" id="3.10.20.70">
    <property type="entry name" value="Glutamine synthetase, N-terminal domain"/>
    <property type="match status" value="1"/>
</dbReference>
<dbReference type="Gene3D" id="3.30.590.10">
    <property type="entry name" value="Glutamine synthetase/guanido kinase, catalytic domain"/>
    <property type="match status" value="1"/>
</dbReference>
<dbReference type="InterPro" id="IPR008147">
    <property type="entry name" value="Gln_synt_N"/>
</dbReference>
<dbReference type="InterPro" id="IPR036651">
    <property type="entry name" value="Gln_synt_N_sf"/>
</dbReference>
<dbReference type="InterPro" id="IPR014746">
    <property type="entry name" value="Gln_synth/guanido_kin_cat_dom"/>
</dbReference>
<dbReference type="InterPro" id="IPR008146">
    <property type="entry name" value="Gln_synth_cat_dom"/>
</dbReference>
<dbReference type="InterPro" id="IPR027303">
    <property type="entry name" value="Gln_synth_gly_rich_site"/>
</dbReference>
<dbReference type="InterPro" id="IPR004809">
    <property type="entry name" value="Gln_synth_I"/>
</dbReference>
<dbReference type="NCBIfam" id="TIGR00653">
    <property type="entry name" value="GlnA"/>
    <property type="match status" value="1"/>
</dbReference>
<dbReference type="PANTHER" id="PTHR43785:SF11">
    <property type="entry name" value="GAMMA-GLUTAMYLPOLYAMINE SYNTHETASE GLNA2"/>
    <property type="match status" value="1"/>
</dbReference>
<dbReference type="PANTHER" id="PTHR43785">
    <property type="entry name" value="GAMMA-GLUTAMYLPUTRESCINE SYNTHETASE"/>
    <property type="match status" value="1"/>
</dbReference>
<dbReference type="Pfam" id="PF00120">
    <property type="entry name" value="Gln-synt_C"/>
    <property type="match status" value="1"/>
</dbReference>
<dbReference type="Pfam" id="PF03951">
    <property type="entry name" value="Gln-synt_N"/>
    <property type="match status" value="1"/>
</dbReference>
<dbReference type="SMART" id="SM01230">
    <property type="entry name" value="Gln-synt_C"/>
    <property type="match status" value="1"/>
</dbReference>
<dbReference type="SUPFAM" id="SSF54368">
    <property type="entry name" value="Glutamine synthetase, N-terminal domain"/>
    <property type="match status" value="1"/>
</dbReference>
<dbReference type="SUPFAM" id="SSF55931">
    <property type="entry name" value="Glutamine synthetase/guanido kinase"/>
    <property type="match status" value="1"/>
</dbReference>
<dbReference type="PROSITE" id="PS00181">
    <property type="entry name" value="GLNA_ATP"/>
    <property type="match status" value="1"/>
</dbReference>
<dbReference type="PROSITE" id="PS51986">
    <property type="entry name" value="GS_BETA_GRASP"/>
    <property type="match status" value="1"/>
</dbReference>
<dbReference type="PROSITE" id="PS51987">
    <property type="entry name" value="GS_CATALYTIC"/>
    <property type="match status" value="1"/>
</dbReference>
<evidence type="ECO:0000250" key="1">
    <source>
        <dbReference type="UniProtKB" id="P0A1P6"/>
    </source>
</evidence>
<evidence type="ECO:0000250" key="2">
    <source>
        <dbReference type="UniProtKB" id="P12425"/>
    </source>
</evidence>
<evidence type="ECO:0000250" key="3">
    <source>
        <dbReference type="UniProtKB" id="P9WN39"/>
    </source>
</evidence>
<evidence type="ECO:0000255" key="4">
    <source>
        <dbReference type="PROSITE-ProRule" id="PRU01330"/>
    </source>
</evidence>
<evidence type="ECO:0000255" key="5">
    <source>
        <dbReference type="PROSITE-ProRule" id="PRU01331"/>
    </source>
</evidence>
<evidence type="ECO:0000255" key="6">
    <source>
        <dbReference type="RuleBase" id="RU000384"/>
    </source>
</evidence>
<evidence type="ECO:0000269" key="7">
    <source>
    </source>
</evidence>
<evidence type="ECO:0000269" key="8">
    <source>
    </source>
</evidence>
<evidence type="ECO:0000269" key="9">
    <source>
    </source>
</evidence>
<evidence type="ECO:0000303" key="10">
    <source>
    </source>
</evidence>
<evidence type="ECO:0000303" key="11">
    <source>
    </source>
</evidence>
<evidence type="ECO:0000303" key="12">
    <source>
    </source>
</evidence>
<evidence type="ECO:0000312" key="13">
    <source>
        <dbReference type="EMBL" id="CAB66175.1"/>
    </source>
</evidence>
<evidence type="ECO:0000312" key="14">
    <source>
        <dbReference type="Proteomes" id="UP000001973"/>
    </source>
</evidence>
<comment type="function">
    <text evidence="7 9">Involved in the catabolism of polyamines. Catalyzes the ATP-dependent gamma-glutamylation of polyamines. Substrates include putrescine, cadaverine, spermidine and spermine, with a preference for short-chain polyamine putrescine (PubMed:35409114). No complementation of the L-glutamine auxotrophy of an E.coli glnA mutant (PubMed:16932908). Together with GlnA3, enables survival of S.coelicolor under exposure to high local environmental polyamine concentrations, which is toxic to the cells (PubMed:35409114).</text>
</comment>
<comment type="catalytic activity">
    <reaction evidence="9">
        <text>putrescine + L-glutamate + ATP = gamma-L-glutamylputrescine + ADP + phosphate + H(+)</text>
        <dbReference type="Rhea" id="RHEA:13633"/>
        <dbReference type="ChEBI" id="CHEBI:15378"/>
        <dbReference type="ChEBI" id="CHEBI:29985"/>
        <dbReference type="ChEBI" id="CHEBI:30616"/>
        <dbReference type="ChEBI" id="CHEBI:43474"/>
        <dbReference type="ChEBI" id="CHEBI:58731"/>
        <dbReference type="ChEBI" id="CHEBI:326268"/>
        <dbReference type="ChEBI" id="CHEBI:456216"/>
    </reaction>
    <physiologicalReaction direction="left-to-right" evidence="9">
        <dbReference type="Rhea" id="RHEA:13634"/>
    </physiologicalReaction>
</comment>
<comment type="catalytic activity">
    <reaction evidence="9">
        <text>spermine + L-glutamate + ATP = gamma-L-glutamylspermine + ADP + phosphate + H(+)</text>
        <dbReference type="Rhea" id="RHEA:73895"/>
        <dbReference type="ChEBI" id="CHEBI:15378"/>
        <dbReference type="ChEBI" id="CHEBI:29985"/>
        <dbReference type="ChEBI" id="CHEBI:30616"/>
        <dbReference type="ChEBI" id="CHEBI:43474"/>
        <dbReference type="ChEBI" id="CHEBI:45725"/>
        <dbReference type="ChEBI" id="CHEBI:193052"/>
        <dbReference type="ChEBI" id="CHEBI:456216"/>
    </reaction>
    <physiologicalReaction direction="left-to-right" evidence="9">
        <dbReference type="Rhea" id="RHEA:73896"/>
    </physiologicalReaction>
</comment>
<comment type="catalytic activity">
    <reaction evidence="9">
        <text>spermidine + L-glutamate + ATP = gamma-L-glutamylspermidine + ADP + phosphate + H(+)</text>
        <dbReference type="Rhea" id="RHEA:73891"/>
        <dbReference type="ChEBI" id="CHEBI:15378"/>
        <dbReference type="ChEBI" id="CHEBI:29985"/>
        <dbReference type="ChEBI" id="CHEBI:30616"/>
        <dbReference type="ChEBI" id="CHEBI:43474"/>
        <dbReference type="ChEBI" id="CHEBI:57834"/>
        <dbReference type="ChEBI" id="CHEBI:193051"/>
        <dbReference type="ChEBI" id="CHEBI:456216"/>
    </reaction>
    <physiologicalReaction direction="left-to-right" evidence="9">
        <dbReference type="Rhea" id="RHEA:73892"/>
    </physiologicalReaction>
</comment>
<comment type="catalytic activity">
    <reaction evidence="9">
        <text>cadaverine + L-glutamate + ATP = gamma-L-glutamylcadaverine + ADP + phosphate + H(+)</text>
        <dbReference type="Rhea" id="RHEA:73899"/>
        <dbReference type="ChEBI" id="CHEBI:15378"/>
        <dbReference type="ChEBI" id="CHEBI:29985"/>
        <dbReference type="ChEBI" id="CHEBI:30616"/>
        <dbReference type="ChEBI" id="CHEBI:43474"/>
        <dbReference type="ChEBI" id="CHEBI:58384"/>
        <dbReference type="ChEBI" id="CHEBI:193053"/>
        <dbReference type="ChEBI" id="CHEBI:456216"/>
    </reaction>
    <physiologicalReaction direction="left-to-right" evidence="9">
        <dbReference type="Rhea" id="RHEA:73900"/>
    </physiologicalReaction>
</comment>
<comment type="cofactor">
    <cofactor evidence="2">
        <name>Mg(2+)</name>
        <dbReference type="ChEBI" id="CHEBI:18420"/>
    </cofactor>
    <text evidence="2">Binds 2 Mg(2+) ions per subunit.</text>
</comment>
<comment type="activity regulation">
    <text evidence="9">No effect on activity with glutamine synthetase (GS) inhibitor methionine sulfoximine (MSO).</text>
</comment>
<comment type="biophysicochemical properties">
    <kinetics>
        <KM evidence="9">0.55 mM for putrescine</KM>
        <KM evidence="9">1.06 mM for glutamate</KM>
        <KM evidence="9">0.13 mM for ATP</KM>
    </kinetics>
</comment>
<comment type="pathway">
    <text evidence="9">Amine and polyamine degradation; putrescine degradation.</text>
</comment>
<comment type="pathway">
    <text evidence="9">Amine and polyamine degradation; spermidine degradation.</text>
</comment>
<comment type="pathway">
    <text evidence="9">Amine and polyamine degradation; spermine degradation.</text>
</comment>
<comment type="induction">
    <text evidence="9">Expression is induced by exogenous putrescine, cadaverine and spermidine, but not with glutamine. Expression is also induced under starvation conditions with concomitant low glucose and ammonium levels, but not by high ammonium or glutamine level. Transcriptionally regulated by acetylated GlnR.</text>
</comment>
<comment type="disruption phenotype">
    <text evidence="8 9">Normal growth on defined Evans agar supplemented with ammonium chloride, sodium nitrate, monosodium L-glutamate, L-glutamine, 200 mM putrescine, 50 mM cadaverine, 25 mM spermidine or 25 mM spermine as a sole nitrogen source (PubMed:28487688). No growth in complex LB medium supplemented with a mixture of 25 mM putrescine, 25 mM cadaverine, 25 mM spermidine and 25 mM spermine, inhibited growth with high concentrations of spermidine or spermine (100 mM) in the medium, but survival of the cells with only putrescine or cadaverine supplementation of the medium, although strongly delayed growth with cadaverine. Able to grow under starvation conditions on defined Evans agar supplemented with glutamate, glutamine, ammonium, nitrate or urea, decreased growth and no sporulation with putrescine, spermidine or spermine and no growth with cadaverine as a sole N-source in this medium. Intracellular accumulation of cadaverine, but not of putrescine or spermidine (PubMed:35409114).</text>
</comment>
<comment type="biotechnology">
    <text evidence="9">This protein has some activity with cysteine and hence may be useful in biotechnical applications as gamma-glutamylation of cysteine strongly increases its solubility in water, which is critical for its usage in medications.</text>
</comment>
<comment type="similarity">
    <text evidence="4 5 6">Belongs to the glutamine synthetase family.</text>
</comment>
<sequence>MDKQQEFVIRTLEERDIRFVRLWFTDVLGFLKSVAVAPAELEQAFDEGIGFDGSAIEGFARVYESDMIAKPDPSTFQVLPWRAEAPGTARMFCDILMPDGSPSFADPRYVLKRALARTSDLGFTFYTHPEIEFFLLKDKPVDGSVPTPADNSGYFDHTPQNIGMDFRRQAITMLESMGISVEFSHHEGAPGQQEIDLRYADALSTADNVMTFRLVMKQVALEQGLQATFMPKPFSEYPGSGMHTHLSLFEGDRNAFYESGAEYQLSKVGRSFIAGLLRHAAEISAVTNQWVNSYKRIWGGTERTAGAGGEAPSYICWGHNNRSALVRVPMYKPGKTGSARVEVRSIDSGANPYLTYAVLLAAGLKGIEEGYELPPGAEDDVWALSDAERRALGIEPLPQNLGEALALMERSDLVAETLGEHVFDFFLRNKRQEWEEYRSQVTAFELRKSLPVL</sequence>
<protein>
    <recommendedName>
        <fullName evidence="12">Gamma-glutamylpolyamine synthetase GlnA2</fullName>
        <ecNumber evidence="9">6.3.1.-</ecNumber>
    </recommendedName>
</protein>
<reference evidence="13 14" key="1">
    <citation type="journal article" date="2002" name="Nature">
        <title>Complete genome sequence of the model actinomycete Streptomyces coelicolor A3(2).</title>
        <authorList>
            <person name="Bentley S.D."/>
            <person name="Chater K.F."/>
            <person name="Cerdeno-Tarraga A.-M."/>
            <person name="Challis G.L."/>
            <person name="Thomson N.R."/>
            <person name="James K.D."/>
            <person name="Harris D.E."/>
            <person name="Quail M.A."/>
            <person name="Kieser H."/>
            <person name="Harper D."/>
            <person name="Bateman A."/>
            <person name="Brown S."/>
            <person name="Chandra G."/>
            <person name="Chen C.W."/>
            <person name="Collins M."/>
            <person name="Cronin A."/>
            <person name="Fraser A."/>
            <person name="Goble A."/>
            <person name="Hidalgo J."/>
            <person name="Hornsby T."/>
            <person name="Howarth S."/>
            <person name="Huang C.-H."/>
            <person name="Kieser T."/>
            <person name="Larke L."/>
            <person name="Murphy L.D."/>
            <person name="Oliver K."/>
            <person name="O'Neil S."/>
            <person name="Rabbinowitsch E."/>
            <person name="Rajandream M.A."/>
            <person name="Rutherford K.M."/>
            <person name="Rutter S."/>
            <person name="Seeger K."/>
            <person name="Saunders D."/>
            <person name="Sharp S."/>
            <person name="Squares R."/>
            <person name="Squares S."/>
            <person name="Taylor K."/>
            <person name="Warren T."/>
            <person name="Wietzorrek A."/>
            <person name="Woodward J.R."/>
            <person name="Barrell B.G."/>
            <person name="Parkhill J."/>
            <person name="Hopwood D.A."/>
        </authorList>
    </citation>
    <scope>NUCLEOTIDE SEQUENCE [LARGE SCALE GENOMIC DNA]</scope>
    <source>
        <strain evidence="14">ATCC BAA-471 / A3(2) / M145</strain>
    </source>
</reference>
<reference key="2">
    <citation type="journal article" date="2006" name="Arch. Microbiol.">
        <title>Investigation of the functional properties and regulation of three glutamine synthetase-like genes in Streptomyces coelicolor A3(2).</title>
        <authorList>
            <person name="Rexer H.U."/>
            <person name="Schaeberle T."/>
            <person name="Wohlleben W."/>
            <person name="Engels A."/>
        </authorList>
    </citation>
    <scope>FUNCTION</scope>
    <source>
        <strain evidence="10">ATCC BAA-471 / A3(2) / M145</strain>
    </source>
</reference>
<reference key="3">
    <citation type="journal article" date="2017" name="Front. Microbiol.">
        <title>Gamma-Glutamylpolyamine Synthetase GlnA3 Is Involved in the First Step of Polyamine Degradation Pathway in Streptomyces coelicolor M145.</title>
        <authorList>
            <person name="Krysenko S."/>
            <person name="Okoniewski N."/>
            <person name="Kulik A."/>
            <person name="Matthews A."/>
            <person name="Grimpo J."/>
            <person name="Wohlleben W."/>
            <person name="Bera A."/>
        </authorList>
    </citation>
    <scope>DISRUPTION PHENOTYPE</scope>
    <source>
        <strain evidence="11">ATCC BAA-471 / A3(2) / M145</strain>
    </source>
</reference>
<reference key="4">
    <citation type="journal article" date="2022" name="Int. J. Mol. Sci.">
        <title>A Second Gamma-Glutamylpolyamine Synthetase, GlnA2, Is Involved in Polyamine Catabolism in Streptomyces coelicolor.</title>
        <authorList>
            <person name="Krysenko S."/>
            <person name="Okoniewski N."/>
            <person name="Nentwich M."/>
            <person name="Matthews A."/>
            <person name="Baeuerle M."/>
            <person name="Zinser A."/>
            <person name="Busche T."/>
            <person name="Kulik A."/>
            <person name="Gursch S."/>
            <person name="Kemeny A."/>
            <person name="Bera A."/>
            <person name="Wohlleben W."/>
        </authorList>
    </citation>
    <scope>FUNCTION</scope>
    <scope>CATALYTIC ACTIVITY</scope>
    <scope>SUBSTRATE SPECIFICITY</scope>
    <scope>ACTIVITY REGULATION</scope>
    <scope>BIOPHYSICOCHEMICAL PROPERTIES</scope>
    <scope>PATHWAY</scope>
    <scope>INDUCTION</scope>
    <scope>DISRUPTION PHENOTYPE</scope>
    <scope>BIOTECHNOLOGY</scope>
    <scope>3D-STRUCTURE MODELING</scope>
    <source>
        <strain evidence="12">ATCC BAA-471 / A3(2) / M145</strain>
    </source>
</reference>
<proteinExistence type="evidence at protein level"/>
<name>GLNA2_STRCO</name>
<feature type="chain" id="PRO_0000456962" description="Gamma-glutamylpolyamine synthetase GlnA2">
    <location>
        <begin position="1"/>
        <end position="453"/>
    </location>
</feature>
<feature type="domain" description="GS beta-grasp" evidence="4">
    <location>
        <begin position="15"/>
        <end position="100"/>
    </location>
</feature>
<feature type="domain" description="GS catalytic" evidence="5">
    <location>
        <begin position="107"/>
        <end position="453"/>
    </location>
</feature>
<feature type="binding site" evidence="2">
    <location>
        <position position="130"/>
    </location>
    <ligand>
        <name>Mg(2+)</name>
        <dbReference type="ChEBI" id="CHEBI:18420"/>
        <label>1</label>
    </ligand>
</feature>
<feature type="binding site" evidence="2">
    <location>
        <position position="132"/>
    </location>
    <ligand>
        <name>Mg(2+)</name>
        <dbReference type="ChEBI" id="CHEBI:18420"/>
        <label>2</label>
    </ligand>
</feature>
<feature type="binding site" evidence="3">
    <location>
        <position position="182"/>
    </location>
    <ligand>
        <name>ATP</name>
        <dbReference type="ChEBI" id="CHEBI:30616"/>
    </ligand>
</feature>
<feature type="binding site" evidence="2">
    <location>
        <position position="187"/>
    </location>
    <ligand>
        <name>Mg(2+)</name>
        <dbReference type="ChEBI" id="CHEBI:18420"/>
        <label>2</label>
    </ligand>
</feature>
<feature type="binding site" evidence="2">
    <location>
        <position position="194"/>
    </location>
    <ligand>
        <name>Mg(2+)</name>
        <dbReference type="ChEBI" id="CHEBI:18420"/>
        <label>2</label>
    </ligand>
</feature>
<feature type="binding site" evidence="2">
    <location>
        <position position="239"/>
    </location>
    <ligand>
        <name>L-glutamate</name>
        <dbReference type="ChEBI" id="CHEBI:29985"/>
    </ligand>
</feature>
<feature type="binding site" evidence="2">
    <location>
        <position position="243"/>
    </location>
    <ligand>
        <name>Mg(2+)</name>
        <dbReference type="ChEBI" id="CHEBI:18420"/>
        <label>1</label>
    </ligand>
</feature>
<feature type="binding site" evidence="1">
    <location>
        <begin position="245"/>
        <end position="247"/>
    </location>
    <ligand>
        <name>ATP</name>
        <dbReference type="ChEBI" id="CHEBI:30616"/>
    </ligand>
</feature>
<feature type="binding site" evidence="1">
    <location>
        <position position="296"/>
    </location>
    <ligand>
        <name>L-glutamate</name>
        <dbReference type="ChEBI" id="CHEBI:29985"/>
    </ligand>
</feature>
<feature type="binding site" evidence="1">
    <location>
        <position position="310"/>
    </location>
    <ligand>
        <name>L-glutamate</name>
        <dbReference type="ChEBI" id="CHEBI:29985"/>
    </ligand>
</feature>
<feature type="binding site" evidence="3">
    <location>
        <position position="322"/>
    </location>
    <ligand>
        <name>ATP</name>
        <dbReference type="ChEBI" id="CHEBI:30616"/>
    </ligand>
</feature>
<feature type="binding site" evidence="3">
    <location>
        <position position="322"/>
    </location>
    <ligand>
        <name>L-glutamate</name>
        <dbReference type="ChEBI" id="CHEBI:29985"/>
    </ligand>
</feature>
<feature type="binding site" evidence="3">
    <location>
        <position position="327"/>
    </location>
    <ligand>
        <name>ATP</name>
        <dbReference type="ChEBI" id="CHEBI:30616"/>
    </ligand>
</feature>
<feature type="binding site" evidence="2">
    <location>
        <position position="342"/>
    </location>
    <ligand>
        <name>Mg(2+)</name>
        <dbReference type="ChEBI" id="CHEBI:18420"/>
        <label>1</label>
    </ligand>
</feature>
<feature type="binding site" evidence="3">
    <location>
        <position position="344"/>
    </location>
    <ligand>
        <name>L-glutamate</name>
        <dbReference type="ChEBI" id="CHEBI:29985"/>
    </ligand>
</feature>
<accession>Q9RDS6</accession>